<reference key="1">
    <citation type="submission" date="2007-11" db="EMBL/GenBank/DDBJ databases">
        <authorList>
            <consortium name="The Salmonella enterica serovar Arizonae Genome Sequencing Project"/>
            <person name="McClelland M."/>
            <person name="Sanderson E.K."/>
            <person name="Porwollik S."/>
            <person name="Spieth J."/>
            <person name="Clifton W.S."/>
            <person name="Fulton R."/>
            <person name="Chunyan W."/>
            <person name="Wollam A."/>
            <person name="Shah N."/>
            <person name="Pepin K."/>
            <person name="Bhonagiri V."/>
            <person name="Nash W."/>
            <person name="Johnson M."/>
            <person name="Thiruvilangam P."/>
            <person name="Wilson R."/>
        </authorList>
    </citation>
    <scope>NUCLEOTIDE SEQUENCE [LARGE SCALE GENOMIC DNA]</scope>
    <source>
        <strain>ATCC BAA-731 / CDC346-86 / RSK2980</strain>
    </source>
</reference>
<keyword id="KW-0963">Cytoplasm</keyword>
<keyword id="KW-0251">Elongation factor</keyword>
<keyword id="KW-0342">GTP-binding</keyword>
<keyword id="KW-0547">Nucleotide-binding</keyword>
<keyword id="KW-0648">Protein biosynthesis</keyword>
<keyword id="KW-1185">Reference proteome</keyword>
<feature type="chain" id="PRO_1000074970" description="Elongation factor G">
    <location>
        <begin position="1"/>
        <end position="704"/>
    </location>
</feature>
<feature type="domain" description="tr-type G">
    <location>
        <begin position="8"/>
        <end position="290"/>
    </location>
</feature>
<feature type="binding site" evidence="1">
    <location>
        <begin position="17"/>
        <end position="24"/>
    </location>
    <ligand>
        <name>GTP</name>
        <dbReference type="ChEBI" id="CHEBI:37565"/>
    </ligand>
</feature>
<feature type="binding site" evidence="1">
    <location>
        <begin position="88"/>
        <end position="92"/>
    </location>
    <ligand>
        <name>GTP</name>
        <dbReference type="ChEBI" id="CHEBI:37565"/>
    </ligand>
</feature>
<feature type="binding site" evidence="1">
    <location>
        <begin position="142"/>
        <end position="145"/>
    </location>
    <ligand>
        <name>GTP</name>
        <dbReference type="ChEBI" id="CHEBI:37565"/>
    </ligand>
</feature>
<gene>
    <name evidence="1" type="primary">fusA</name>
    <name type="ordered locus">SARI_04180</name>
</gene>
<dbReference type="EMBL" id="CP000880">
    <property type="protein sequence ID" value="ABX23969.1"/>
    <property type="molecule type" value="Genomic_DNA"/>
</dbReference>
<dbReference type="SMR" id="A9MN39"/>
<dbReference type="STRING" id="41514.SARI_04180"/>
<dbReference type="KEGG" id="ses:SARI_04180"/>
<dbReference type="HOGENOM" id="CLU_002794_4_1_6"/>
<dbReference type="Proteomes" id="UP000002084">
    <property type="component" value="Chromosome"/>
</dbReference>
<dbReference type="GO" id="GO:0005737">
    <property type="term" value="C:cytoplasm"/>
    <property type="evidence" value="ECO:0007669"/>
    <property type="project" value="UniProtKB-SubCell"/>
</dbReference>
<dbReference type="GO" id="GO:0005525">
    <property type="term" value="F:GTP binding"/>
    <property type="evidence" value="ECO:0007669"/>
    <property type="project" value="UniProtKB-UniRule"/>
</dbReference>
<dbReference type="GO" id="GO:0003924">
    <property type="term" value="F:GTPase activity"/>
    <property type="evidence" value="ECO:0007669"/>
    <property type="project" value="InterPro"/>
</dbReference>
<dbReference type="GO" id="GO:0097216">
    <property type="term" value="F:guanosine tetraphosphate binding"/>
    <property type="evidence" value="ECO:0007669"/>
    <property type="project" value="UniProtKB-ARBA"/>
</dbReference>
<dbReference type="GO" id="GO:0003746">
    <property type="term" value="F:translation elongation factor activity"/>
    <property type="evidence" value="ECO:0007669"/>
    <property type="project" value="UniProtKB-UniRule"/>
</dbReference>
<dbReference type="GO" id="GO:0032790">
    <property type="term" value="P:ribosome disassembly"/>
    <property type="evidence" value="ECO:0007669"/>
    <property type="project" value="TreeGrafter"/>
</dbReference>
<dbReference type="CDD" id="cd01886">
    <property type="entry name" value="EF-G"/>
    <property type="match status" value="1"/>
</dbReference>
<dbReference type="CDD" id="cd16262">
    <property type="entry name" value="EFG_III"/>
    <property type="match status" value="1"/>
</dbReference>
<dbReference type="CDD" id="cd01434">
    <property type="entry name" value="EFG_mtEFG1_IV"/>
    <property type="match status" value="1"/>
</dbReference>
<dbReference type="CDD" id="cd03713">
    <property type="entry name" value="EFG_mtEFG_C"/>
    <property type="match status" value="1"/>
</dbReference>
<dbReference type="CDD" id="cd04088">
    <property type="entry name" value="EFG_mtEFG_II"/>
    <property type="match status" value="1"/>
</dbReference>
<dbReference type="FunFam" id="2.40.30.10:FF:000006">
    <property type="entry name" value="Elongation factor G"/>
    <property type="match status" value="1"/>
</dbReference>
<dbReference type="FunFam" id="3.30.230.10:FF:000003">
    <property type="entry name" value="Elongation factor G"/>
    <property type="match status" value="1"/>
</dbReference>
<dbReference type="FunFam" id="3.30.70.240:FF:000001">
    <property type="entry name" value="Elongation factor G"/>
    <property type="match status" value="1"/>
</dbReference>
<dbReference type="FunFam" id="3.30.70.870:FF:000001">
    <property type="entry name" value="Elongation factor G"/>
    <property type="match status" value="1"/>
</dbReference>
<dbReference type="FunFam" id="3.40.50.300:FF:000029">
    <property type="entry name" value="Elongation factor G"/>
    <property type="match status" value="1"/>
</dbReference>
<dbReference type="Gene3D" id="3.30.230.10">
    <property type="match status" value="1"/>
</dbReference>
<dbReference type="Gene3D" id="3.30.70.240">
    <property type="match status" value="1"/>
</dbReference>
<dbReference type="Gene3D" id="3.30.70.870">
    <property type="entry name" value="Elongation Factor G (Translational Gtpase), domain 3"/>
    <property type="match status" value="1"/>
</dbReference>
<dbReference type="Gene3D" id="3.40.50.300">
    <property type="entry name" value="P-loop containing nucleotide triphosphate hydrolases"/>
    <property type="match status" value="1"/>
</dbReference>
<dbReference type="Gene3D" id="2.40.30.10">
    <property type="entry name" value="Translation factors"/>
    <property type="match status" value="1"/>
</dbReference>
<dbReference type="HAMAP" id="MF_00054_B">
    <property type="entry name" value="EF_G_EF_2_B"/>
    <property type="match status" value="1"/>
</dbReference>
<dbReference type="InterPro" id="IPR041095">
    <property type="entry name" value="EFG_II"/>
</dbReference>
<dbReference type="InterPro" id="IPR009022">
    <property type="entry name" value="EFG_III"/>
</dbReference>
<dbReference type="InterPro" id="IPR035647">
    <property type="entry name" value="EFG_III/V"/>
</dbReference>
<dbReference type="InterPro" id="IPR047872">
    <property type="entry name" value="EFG_IV"/>
</dbReference>
<dbReference type="InterPro" id="IPR035649">
    <property type="entry name" value="EFG_V"/>
</dbReference>
<dbReference type="InterPro" id="IPR000640">
    <property type="entry name" value="EFG_V-like"/>
</dbReference>
<dbReference type="InterPro" id="IPR004161">
    <property type="entry name" value="EFTu-like_2"/>
</dbReference>
<dbReference type="InterPro" id="IPR031157">
    <property type="entry name" value="G_TR_CS"/>
</dbReference>
<dbReference type="InterPro" id="IPR027417">
    <property type="entry name" value="P-loop_NTPase"/>
</dbReference>
<dbReference type="InterPro" id="IPR020568">
    <property type="entry name" value="Ribosomal_Su5_D2-typ_SF"/>
</dbReference>
<dbReference type="InterPro" id="IPR014721">
    <property type="entry name" value="Ribsml_uS5_D2-typ_fold_subgr"/>
</dbReference>
<dbReference type="InterPro" id="IPR005225">
    <property type="entry name" value="Small_GTP-bd"/>
</dbReference>
<dbReference type="InterPro" id="IPR000795">
    <property type="entry name" value="T_Tr_GTP-bd_dom"/>
</dbReference>
<dbReference type="InterPro" id="IPR009000">
    <property type="entry name" value="Transl_B-barrel_sf"/>
</dbReference>
<dbReference type="InterPro" id="IPR004540">
    <property type="entry name" value="Transl_elong_EFG/EF2"/>
</dbReference>
<dbReference type="InterPro" id="IPR005517">
    <property type="entry name" value="Transl_elong_EFG/EF2_IV"/>
</dbReference>
<dbReference type="NCBIfam" id="TIGR00484">
    <property type="entry name" value="EF-G"/>
    <property type="match status" value="1"/>
</dbReference>
<dbReference type="NCBIfam" id="NF009381">
    <property type="entry name" value="PRK12740.1-5"/>
    <property type="match status" value="1"/>
</dbReference>
<dbReference type="NCBIfam" id="TIGR00231">
    <property type="entry name" value="small_GTP"/>
    <property type="match status" value="1"/>
</dbReference>
<dbReference type="PANTHER" id="PTHR43261:SF1">
    <property type="entry name" value="RIBOSOME-RELEASING FACTOR 2, MITOCHONDRIAL"/>
    <property type="match status" value="1"/>
</dbReference>
<dbReference type="PANTHER" id="PTHR43261">
    <property type="entry name" value="TRANSLATION ELONGATION FACTOR G-RELATED"/>
    <property type="match status" value="1"/>
</dbReference>
<dbReference type="Pfam" id="PF00679">
    <property type="entry name" value="EFG_C"/>
    <property type="match status" value="1"/>
</dbReference>
<dbReference type="Pfam" id="PF14492">
    <property type="entry name" value="EFG_III"/>
    <property type="match status" value="1"/>
</dbReference>
<dbReference type="Pfam" id="PF03764">
    <property type="entry name" value="EFG_IV"/>
    <property type="match status" value="1"/>
</dbReference>
<dbReference type="Pfam" id="PF00009">
    <property type="entry name" value="GTP_EFTU"/>
    <property type="match status" value="1"/>
</dbReference>
<dbReference type="Pfam" id="PF03144">
    <property type="entry name" value="GTP_EFTU_D2"/>
    <property type="match status" value="1"/>
</dbReference>
<dbReference type="PRINTS" id="PR00315">
    <property type="entry name" value="ELONGATNFCT"/>
</dbReference>
<dbReference type="SMART" id="SM00838">
    <property type="entry name" value="EFG_C"/>
    <property type="match status" value="1"/>
</dbReference>
<dbReference type="SMART" id="SM00889">
    <property type="entry name" value="EFG_IV"/>
    <property type="match status" value="1"/>
</dbReference>
<dbReference type="SUPFAM" id="SSF54980">
    <property type="entry name" value="EF-G C-terminal domain-like"/>
    <property type="match status" value="2"/>
</dbReference>
<dbReference type="SUPFAM" id="SSF52540">
    <property type="entry name" value="P-loop containing nucleoside triphosphate hydrolases"/>
    <property type="match status" value="1"/>
</dbReference>
<dbReference type="SUPFAM" id="SSF54211">
    <property type="entry name" value="Ribosomal protein S5 domain 2-like"/>
    <property type="match status" value="1"/>
</dbReference>
<dbReference type="SUPFAM" id="SSF50447">
    <property type="entry name" value="Translation proteins"/>
    <property type="match status" value="1"/>
</dbReference>
<dbReference type="PROSITE" id="PS00301">
    <property type="entry name" value="G_TR_1"/>
    <property type="match status" value="1"/>
</dbReference>
<dbReference type="PROSITE" id="PS51722">
    <property type="entry name" value="G_TR_2"/>
    <property type="match status" value="1"/>
</dbReference>
<organism>
    <name type="scientific">Salmonella arizonae (strain ATCC BAA-731 / CDC346-86 / RSK2980)</name>
    <dbReference type="NCBI Taxonomy" id="41514"/>
    <lineage>
        <taxon>Bacteria</taxon>
        <taxon>Pseudomonadati</taxon>
        <taxon>Pseudomonadota</taxon>
        <taxon>Gammaproteobacteria</taxon>
        <taxon>Enterobacterales</taxon>
        <taxon>Enterobacteriaceae</taxon>
        <taxon>Salmonella</taxon>
    </lineage>
</organism>
<evidence type="ECO:0000255" key="1">
    <source>
        <dbReference type="HAMAP-Rule" id="MF_00054"/>
    </source>
</evidence>
<sequence>MARTTPIARYRNIGISAHIDAGKTTTTERILFYTGVNHKIGEVHDGAATMDWMEQEQERGITITSAATTAFWSGMAKQYEPHRINIIDTPGHVDFTIEVERSMRVLDGAVMVYCAVGGVQPQSETVWRQANKYKVPRIAFVNKMDRMGANFLKVVGQIKTRLGANPVPLQLAIGAEEGFTGVVDLVKMKAINWNDADQGVTFEYEDIPADMQDLADEWHQNLIESAAEASEELMEKYLGGEELTEEEIKQALRQRVLNNEIILVTCGSAFKNKGVQAMLDAVIDYLPSPVDVPAINGILDDGKDTPAERHASDDEPFSALAFKIATDPFVGNLTFFRVYSGVVNSGDTVLNSVKTARERFGRIVQMHANKREEIKEVRAGDIAAAIGLKDVTTGDTLCDPENPIILERMEFPEPVISIAVEPKTKADQEKMGLALGRLAKEDPSFRVWTDEESNQTIIAGMGELHLDIIVDRMKREFNVEANVGKPQVAYREAIRAKVTDIEGKHAKQSGGRGQYGHVVIDMYPLEPGSNPKGYEFINDIKGGVIPGEYIPAVDKGIQEQLKSGPLAGYPVVDLGVRLHFGSYHDVDSSELAFKLAASIAFKEGFKKAKPVLLEPIMKVEVETPEENTGDVIGDLSRRRGMLKGQESEVTGVKIHAEVPLSEMFGYATQLRSLTKGRASYTMEFLKYDDAPNNVAQAVIEARGK</sequence>
<comment type="function">
    <text evidence="1">Catalyzes the GTP-dependent ribosomal translocation step during translation elongation. During this step, the ribosome changes from the pre-translocational (PRE) to the post-translocational (POST) state as the newly formed A-site-bound peptidyl-tRNA and P-site-bound deacylated tRNA move to the P and E sites, respectively. Catalyzes the coordinated movement of the two tRNA molecules, the mRNA and conformational changes in the ribosome.</text>
</comment>
<comment type="subcellular location">
    <subcellularLocation>
        <location evidence="1">Cytoplasm</location>
    </subcellularLocation>
</comment>
<comment type="similarity">
    <text evidence="1">Belongs to the TRAFAC class translation factor GTPase superfamily. Classic translation factor GTPase family. EF-G/EF-2 subfamily.</text>
</comment>
<name>EFG_SALAR</name>
<accession>A9MN39</accession>
<protein>
    <recommendedName>
        <fullName evidence="1">Elongation factor G</fullName>
        <shortName evidence="1">EF-G</shortName>
    </recommendedName>
</protein>
<proteinExistence type="inferred from homology"/>